<comment type="interaction">
    <interactant intactId="EBI-15975794">
        <id>Q9WYC4</id>
    </interactant>
    <interactant intactId="EBI-15975772">
        <id>Q9WYC3</id>
        <label>TM_0287</label>
    </interactant>
    <organismsDiffer>false</organismsDiffer>
    <experiments>4</experiments>
</comment>
<comment type="subcellular location">
    <subcellularLocation>
        <location evidence="3">Cell membrane</location>
        <topology evidence="2">Multi-pass membrane protein</topology>
    </subcellularLocation>
</comment>
<comment type="similarity">
    <text evidence="3">Belongs to the ABC transporter superfamily.</text>
</comment>
<organism>
    <name type="scientific">Thermotoga maritima (strain ATCC 43589 / DSM 3109 / JCM 10099 / NBRC 100826 / MSB8)</name>
    <dbReference type="NCBI Taxonomy" id="243274"/>
    <lineage>
        <taxon>Bacteria</taxon>
        <taxon>Thermotogati</taxon>
        <taxon>Thermotogota</taxon>
        <taxon>Thermotogae</taxon>
        <taxon>Thermotogales</taxon>
        <taxon>Thermotogaceae</taxon>
        <taxon>Thermotoga</taxon>
    </lineage>
</organism>
<proteinExistence type="evidence at protein level"/>
<protein>
    <recommendedName>
        <fullName>Uncharacterized ABC transporter ATP-binding protein TM_0288</fullName>
    </recommendedName>
</protein>
<gene>
    <name type="ordered locus">TM_0288</name>
</gene>
<reference key="1">
    <citation type="journal article" date="1999" name="Nature">
        <title>Evidence for lateral gene transfer between Archaea and Bacteria from genome sequence of Thermotoga maritima.</title>
        <authorList>
            <person name="Nelson K.E."/>
            <person name="Clayton R.A."/>
            <person name="Gill S.R."/>
            <person name="Gwinn M.L."/>
            <person name="Dodson R.J."/>
            <person name="Haft D.H."/>
            <person name="Hickey E.K."/>
            <person name="Peterson J.D."/>
            <person name="Nelson W.C."/>
            <person name="Ketchum K.A."/>
            <person name="McDonald L.A."/>
            <person name="Utterback T.R."/>
            <person name="Malek J.A."/>
            <person name="Linher K.D."/>
            <person name="Garrett M.M."/>
            <person name="Stewart A.M."/>
            <person name="Cotton M.D."/>
            <person name="Pratt M.S."/>
            <person name="Phillips C.A."/>
            <person name="Richardson D.L."/>
            <person name="Heidelberg J.F."/>
            <person name="Sutton G.G."/>
            <person name="Fleischmann R.D."/>
            <person name="Eisen J.A."/>
            <person name="White O."/>
            <person name="Salzberg S.L."/>
            <person name="Smith H.O."/>
            <person name="Venter J.C."/>
            <person name="Fraser C.M."/>
        </authorList>
    </citation>
    <scope>NUCLEOTIDE SEQUENCE [LARGE SCALE GENOMIC DNA]</scope>
    <source>
        <strain>ATCC 43589 / DSM 3109 / JCM 10099 / NBRC 100826 / MSB8</strain>
    </source>
</reference>
<feature type="chain" id="PRO_0000093279" description="Uncharacterized ABC transporter ATP-binding protein TM_0288">
    <location>
        <begin position="1"/>
        <end position="598"/>
    </location>
</feature>
<feature type="transmembrane region" description="Helical" evidence="2">
    <location>
        <begin position="40"/>
        <end position="60"/>
    </location>
</feature>
<feature type="transmembrane region" description="Helical" evidence="2">
    <location>
        <begin position="80"/>
        <end position="100"/>
    </location>
</feature>
<feature type="transmembrane region" description="Helical" evidence="2">
    <location>
        <begin position="150"/>
        <end position="170"/>
    </location>
</feature>
<feature type="transmembrane region" description="Helical" evidence="2">
    <location>
        <begin position="177"/>
        <end position="197"/>
    </location>
</feature>
<feature type="transmembrane region" description="Helical" evidence="2">
    <location>
        <begin position="273"/>
        <end position="293"/>
    </location>
</feature>
<feature type="domain" description="ABC transmembrane type-1" evidence="2">
    <location>
        <begin position="39"/>
        <end position="322"/>
    </location>
</feature>
<feature type="domain" description="ABC transporter" evidence="1">
    <location>
        <begin position="355"/>
        <end position="589"/>
    </location>
</feature>
<feature type="binding site" evidence="1">
    <location>
        <begin position="388"/>
        <end position="395"/>
    </location>
    <ligand>
        <name>ATP</name>
        <dbReference type="ChEBI" id="CHEBI:30616"/>
    </ligand>
</feature>
<feature type="helix" evidence="6">
    <location>
        <begin position="21"/>
        <end position="28"/>
    </location>
</feature>
<feature type="turn" evidence="6">
    <location>
        <begin position="29"/>
        <end position="31"/>
    </location>
</feature>
<feature type="helix" evidence="6">
    <location>
        <begin position="33"/>
        <end position="35"/>
    </location>
</feature>
<feature type="helix" evidence="6">
    <location>
        <begin position="36"/>
        <end position="66"/>
    </location>
</feature>
<feature type="turn" evidence="6">
    <location>
        <begin position="67"/>
        <end position="71"/>
    </location>
</feature>
<feature type="helix" evidence="5">
    <location>
        <begin position="73"/>
        <end position="75"/>
    </location>
</feature>
<feature type="helix" evidence="6">
    <location>
        <begin position="76"/>
        <end position="122"/>
    </location>
</feature>
<feature type="helix" evidence="6">
    <location>
        <begin position="125"/>
        <end position="130"/>
    </location>
</feature>
<feature type="helix" evidence="6">
    <location>
        <begin position="133"/>
        <end position="152"/>
    </location>
</feature>
<feature type="helix" evidence="6">
    <location>
        <begin position="154"/>
        <end position="175"/>
    </location>
</feature>
<feature type="helix" evidence="6">
    <location>
        <begin position="177"/>
        <end position="183"/>
    </location>
</feature>
<feature type="helix" evidence="6">
    <location>
        <begin position="186"/>
        <end position="224"/>
    </location>
</feature>
<feature type="helix" evidence="6">
    <location>
        <begin position="226"/>
        <end position="231"/>
    </location>
</feature>
<feature type="turn" evidence="9">
    <location>
        <begin position="232"/>
        <end position="234"/>
    </location>
</feature>
<feature type="helix" evidence="6">
    <location>
        <begin position="235"/>
        <end position="259"/>
    </location>
</feature>
<feature type="turn" evidence="4">
    <location>
        <begin position="260"/>
        <end position="262"/>
    </location>
</feature>
<feature type="helix" evidence="6">
    <location>
        <begin position="263"/>
        <end position="287"/>
    </location>
</feature>
<feature type="strand" evidence="10">
    <location>
        <begin position="288"/>
        <end position="290"/>
    </location>
</feature>
<feature type="helix" evidence="6">
    <location>
        <begin position="293"/>
        <end position="301"/>
    </location>
</feature>
<feature type="turn" evidence="6">
    <location>
        <begin position="302"/>
        <end position="306"/>
    </location>
</feature>
<feature type="helix" evidence="6">
    <location>
        <begin position="308"/>
        <end position="333"/>
    </location>
</feature>
<feature type="strand" evidence="8">
    <location>
        <begin position="355"/>
        <end position="362"/>
    </location>
</feature>
<feature type="strand" evidence="8">
    <location>
        <begin position="364"/>
        <end position="368"/>
    </location>
</feature>
<feature type="strand" evidence="8">
    <location>
        <begin position="370"/>
        <end position="378"/>
    </location>
</feature>
<feature type="strand" evidence="8">
    <location>
        <begin position="383"/>
        <end position="387"/>
    </location>
</feature>
<feature type="helix" evidence="8">
    <location>
        <begin position="394"/>
        <end position="401"/>
    </location>
</feature>
<feature type="strand" evidence="8">
    <location>
        <begin position="408"/>
        <end position="414"/>
    </location>
</feature>
<feature type="helix" evidence="8">
    <location>
        <begin position="419"/>
        <end position="421"/>
    </location>
</feature>
<feature type="helix" evidence="8">
    <location>
        <begin position="424"/>
        <end position="429"/>
    </location>
</feature>
<feature type="strand" evidence="8">
    <location>
        <begin position="431"/>
        <end position="434"/>
    </location>
</feature>
<feature type="strand" evidence="8">
    <location>
        <begin position="442"/>
        <end position="444"/>
    </location>
</feature>
<feature type="helix" evidence="8">
    <location>
        <begin position="445"/>
        <end position="449"/>
    </location>
</feature>
<feature type="turn" evidence="8">
    <location>
        <begin position="450"/>
        <end position="452"/>
    </location>
</feature>
<feature type="helix" evidence="8">
    <location>
        <begin position="458"/>
        <end position="467"/>
    </location>
</feature>
<feature type="helix" evidence="8">
    <location>
        <begin position="471"/>
        <end position="475"/>
    </location>
</feature>
<feature type="strand" evidence="9">
    <location>
        <begin position="477"/>
        <end position="479"/>
    </location>
</feature>
<feature type="helix" evidence="8">
    <location>
        <begin position="480"/>
        <end position="482"/>
    </location>
</feature>
<feature type="helix" evidence="8">
    <location>
        <begin position="486"/>
        <end position="489"/>
    </location>
</feature>
<feature type="helix" evidence="8">
    <location>
        <begin position="494"/>
        <end position="507"/>
    </location>
</feature>
<feature type="strand" evidence="8">
    <location>
        <begin position="511"/>
        <end position="516"/>
    </location>
</feature>
<feature type="turn" evidence="10">
    <location>
        <begin position="517"/>
        <end position="519"/>
    </location>
</feature>
<feature type="strand" evidence="7">
    <location>
        <begin position="520"/>
        <end position="522"/>
    </location>
</feature>
<feature type="helix" evidence="8">
    <location>
        <begin position="524"/>
        <end position="538"/>
    </location>
</feature>
<feature type="strand" evidence="8">
    <location>
        <begin position="541"/>
        <end position="546"/>
    </location>
</feature>
<feature type="helix" evidence="8">
    <location>
        <begin position="552"/>
        <end position="555"/>
    </location>
</feature>
<feature type="strand" evidence="8">
    <location>
        <begin position="557"/>
        <end position="563"/>
    </location>
</feature>
<feature type="strand" evidence="8">
    <location>
        <begin position="566"/>
        <end position="571"/>
    </location>
</feature>
<feature type="helix" evidence="8">
    <location>
        <begin position="573"/>
        <end position="579"/>
    </location>
</feature>
<feature type="helix" evidence="8">
    <location>
        <begin position="582"/>
        <end position="591"/>
    </location>
</feature>
<feature type="helix" evidence="4">
    <location>
        <begin position="592"/>
        <end position="596"/>
    </location>
</feature>
<evidence type="ECO:0000255" key="1">
    <source>
        <dbReference type="PROSITE-ProRule" id="PRU00434"/>
    </source>
</evidence>
<evidence type="ECO:0000255" key="2">
    <source>
        <dbReference type="PROSITE-ProRule" id="PRU00441"/>
    </source>
</evidence>
<evidence type="ECO:0000305" key="3"/>
<evidence type="ECO:0007829" key="4">
    <source>
        <dbReference type="PDB" id="3QF4"/>
    </source>
</evidence>
<evidence type="ECO:0007829" key="5">
    <source>
        <dbReference type="PDB" id="4Q4A"/>
    </source>
</evidence>
<evidence type="ECO:0007829" key="6">
    <source>
        <dbReference type="PDB" id="4Q4H"/>
    </source>
</evidence>
<evidence type="ECO:0007829" key="7">
    <source>
        <dbReference type="PDB" id="4Q7L"/>
    </source>
</evidence>
<evidence type="ECO:0007829" key="8">
    <source>
        <dbReference type="PDB" id="4Q7M"/>
    </source>
</evidence>
<evidence type="ECO:0007829" key="9">
    <source>
        <dbReference type="PDB" id="6QV0"/>
    </source>
</evidence>
<evidence type="ECO:0007829" key="10">
    <source>
        <dbReference type="PDB" id="6QV1"/>
    </source>
</evidence>
<name>Y288_THEMA</name>
<accession>Q9WYC4</accession>
<keyword id="KW-0002">3D-structure</keyword>
<keyword id="KW-0067">ATP-binding</keyword>
<keyword id="KW-1003">Cell membrane</keyword>
<keyword id="KW-0472">Membrane</keyword>
<keyword id="KW-0547">Nucleotide-binding</keyword>
<keyword id="KW-1185">Reference proteome</keyword>
<keyword id="KW-0812">Transmembrane</keyword>
<keyword id="KW-1133">Transmembrane helix</keyword>
<keyword id="KW-0813">Transport</keyword>
<sequence>MPEIRRRPHGPILEKPALKNPTATLRRLLGYLRPHTFTLIMVFVFVTVSSILGVLSPYLIGKTIDVVFVPRRFDLLPRYMLILGTIYALTSLLFWLQGKIMLTLSQDVVFRLRKELFEKLQRVPVGFFDRTPHGDIISRVINDVDNINNVLGNSIIQFFSGIVTLAGAVIMMFRVNVILSLVTLSIVPLTVLITQIVSSQTRKYFYENQRVLGQLNGIIEEDISGLTVIKLFTREEKEMEKFDRVNESLRKVGTKAQIFSGVLPPLMNMVNNLGFALISGFGGWLALKDIITVGTIATFIGYSRQFTRPLNELSNQFNMIQMALASAERIFEILDLEEEKDDPDAVELREVRGEIEFKNVWFSYDKKKPVLKDITFHIKPGQKVALVGPTGSGKTTIVNLLMRFYDVDRGQILVDGIDIRKIKRSSLRSSIGIVLQDTILFSTTVKENLKYGNPGATDEEIKEAAKLTHSDHFIKHLPEGYETVLTDNGEDLSQGQRQLLAITRAFLANPKILILDEATSNVDTKTEKSIQAAMWKLMEGKTSIIIAHRLNTIKNADLIIVLRDGEIVEMGKHDELIQKRGFYYELFTSQYGLVVEKE</sequence>
<dbReference type="EMBL" id="AE000512">
    <property type="protein sequence ID" value="AAD35376.1"/>
    <property type="molecule type" value="Genomic_DNA"/>
</dbReference>
<dbReference type="PIR" id="F72396">
    <property type="entry name" value="F72396"/>
</dbReference>
<dbReference type="RefSeq" id="NP_228100.1">
    <property type="nucleotide sequence ID" value="NC_000853.1"/>
</dbReference>
<dbReference type="RefSeq" id="WP_004083002.1">
    <property type="nucleotide sequence ID" value="NC_000853.1"/>
</dbReference>
<dbReference type="PDB" id="3QF4">
    <property type="method" value="X-ray"/>
    <property type="resolution" value="2.90 A"/>
    <property type="chains" value="B=1-598"/>
</dbReference>
<dbReference type="PDB" id="4Q4A">
    <property type="method" value="X-ray"/>
    <property type="resolution" value="2.60 A"/>
    <property type="chains" value="B=1-598"/>
</dbReference>
<dbReference type="PDB" id="4Q4H">
    <property type="method" value="X-ray"/>
    <property type="resolution" value="2.53 A"/>
    <property type="chains" value="B=1-598"/>
</dbReference>
<dbReference type="PDB" id="4Q4J">
    <property type="method" value="X-ray"/>
    <property type="resolution" value="3.20 A"/>
    <property type="chains" value="B=1-598"/>
</dbReference>
<dbReference type="PDB" id="4Q7L">
    <property type="method" value="X-ray"/>
    <property type="resolution" value="2.35 A"/>
    <property type="chains" value="A/B/C=353-598"/>
</dbReference>
<dbReference type="PDB" id="4Q7M">
    <property type="method" value="X-ray"/>
    <property type="resolution" value="2.30 A"/>
    <property type="chains" value="B=353-598"/>
</dbReference>
<dbReference type="PDB" id="6QUZ">
    <property type="method" value="X-ray"/>
    <property type="resolution" value="3.21 A"/>
    <property type="chains" value="B/D=1-598"/>
</dbReference>
<dbReference type="PDB" id="6QV0">
    <property type="method" value="X-ray"/>
    <property type="resolution" value="3.12 A"/>
    <property type="chains" value="B/D=1-598"/>
</dbReference>
<dbReference type="PDB" id="6QV1">
    <property type="method" value="X-ray"/>
    <property type="resolution" value="3.48 A"/>
    <property type="chains" value="B/D=1-598"/>
</dbReference>
<dbReference type="PDB" id="6QV2">
    <property type="method" value="X-ray"/>
    <property type="resolution" value="4.23 A"/>
    <property type="chains" value="B/D=1-598"/>
</dbReference>
<dbReference type="PDBsum" id="3QF4"/>
<dbReference type="PDBsum" id="4Q4A"/>
<dbReference type="PDBsum" id="4Q4H"/>
<dbReference type="PDBsum" id="4Q4J"/>
<dbReference type="PDBsum" id="4Q7L"/>
<dbReference type="PDBsum" id="4Q7M"/>
<dbReference type="PDBsum" id="6QUZ"/>
<dbReference type="PDBsum" id="6QV0"/>
<dbReference type="PDBsum" id="6QV1"/>
<dbReference type="PDBsum" id="6QV2"/>
<dbReference type="SMR" id="Q9WYC4"/>
<dbReference type="FunCoup" id="Q9WYC4">
    <property type="interactions" value="265"/>
</dbReference>
<dbReference type="IntAct" id="Q9WYC4">
    <property type="interactions" value="1"/>
</dbReference>
<dbReference type="STRING" id="243274.TM_0288"/>
<dbReference type="TCDB" id="3.A.1.135.5">
    <property type="family name" value="the atp-binding cassette (abc) superfamily"/>
</dbReference>
<dbReference type="PaxDb" id="243274-THEMA_03285"/>
<dbReference type="ABCD" id="Q9WYC4">
    <property type="antibodies" value="12 sequenced antibodies"/>
</dbReference>
<dbReference type="DNASU" id="897208"/>
<dbReference type="EnsemblBacteria" id="AAD35376">
    <property type="protein sequence ID" value="AAD35376"/>
    <property type="gene ID" value="TM_0288"/>
</dbReference>
<dbReference type="KEGG" id="tma:TM0288"/>
<dbReference type="KEGG" id="tmi:THEMA_03285"/>
<dbReference type="KEGG" id="tmm:Tmari_0286"/>
<dbReference type="KEGG" id="tmw:THMA_0295"/>
<dbReference type="eggNOG" id="COG1132">
    <property type="taxonomic scope" value="Bacteria"/>
</dbReference>
<dbReference type="InParanoid" id="Q9WYC4"/>
<dbReference type="OrthoDB" id="40044at2"/>
<dbReference type="EvolutionaryTrace" id="Q9WYC4"/>
<dbReference type="Proteomes" id="UP000008183">
    <property type="component" value="Chromosome"/>
</dbReference>
<dbReference type="GO" id="GO:0005886">
    <property type="term" value="C:plasma membrane"/>
    <property type="evidence" value="ECO:0007669"/>
    <property type="project" value="UniProtKB-SubCell"/>
</dbReference>
<dbReference type="GO" id="GO:0140359">
    <property type="term" value="F:ABC-type transporter activity"/>
    <property type="evidence" value="ECO:0007669"/>
    <property type="project" value="InterPro"/>
</dbReference>
<dbReference type="GO" id="GO:0005524">
    <property type="term" value="F:ATP binding"/>
    <property type="evidence" value="ECO:0007669"/>
    <property type="project" value="UniProtKB-KW"/>
</dbReference>
<dbReference type="GO" id="GO:0016887">
    <property type="term" value="F:ATP hydrolysis activity"/>
    <property type="evidence" value="ECO:0007669"/>
    <property type="project" value="InterPro"/>
</dbReference>
<dbReference type="GO" id="GO:0042626">
    <property type="term" value="F:ATPase-coupled transmembrane transporter activity"/>
    <property type="evidence" value="ECO:0000318"/>
    <property type="project" value="GO_Central"/>
</dbReference>
<dbReference type="GO" id="GO:0055085">
    <property type="term" value="P:transmembrane transport"/>
    <property type="evidence" value="ECO:0000318"/>
    <property type="project" value="GO_Central"/>
</dbReference>
<dbReference type="CDD" id="cd18547">
    <property type="entry name" value="ABC_6TM_Tm288_like"/>
    <property type="match status" value="1"/>
</dbReference>
<dbReference type="CDD" id="cd03254">
    <property type="entry name" value="ABCC_Glucan_exporter_like"/>
    <property type="match status" value="1"/>
</dbReference>
<dbReference type="FunFam" id="1.20.1560.10:FF:000011">
    <property type="entry name" value="Multidrug ABC transporter ATP-binding protein"/>
    <property type="match status" value="1"/>
</dbReference>
<dbReference type="FunFam" id="3.40.50.300:FF:000287">
    <property type="entry name" value="Multidrug ABC transporter ATP-binding protein"/>
    <property type="match status" value="1"/>
</dbReference>
<dbReference type="Gene3D" id="1.20.1560.10">
    <property type="entry name" value="ABC transporter type 1, transmembrane domain"/>
    <property type="match status" value="1"/>
</dbReference>
<dbReference type="Gene3D" id="3.40.50.300">
    <property type="entry name" value="P-loop containing nucleotide triphosphate hydrolases"/>
    <property type="match status" value="1"/>
</dbReference>
<dbReference type="InterPro" id="IPR003593">
    <property type="entry name" value="AAA+_ATPase"/>
</dbReference>
<dbReference type="InterPro" id="IPR011527">
    <property type="entry name" value="ABC1_TM_dom"/>
</dbReference>
<dbReference type="InterPro" id="IPR036640">
    <property type="entry name" value="ABC1_TM_sf"/>
</dbReference>
<dbReference type="InterPro" id="IPR003439">
    <property type="entry name" value="ABC_transporter-like_ATP-bd"/>
</dbReference>
<dbReference type="InterPro" id="IPR027417">
    <property type="entry name" value="P-loop_NTPase"/>
</dbReference>
<dbReference type="InterPro" id="IPR039421">
    <property type="entry name" value="Type_1_exporter"/>
</dbReference>
<dbReference type="PANTHER" id="PTHR43394:SF1">
    <property type="entry name" value="ATP-BINDING CASSETTE SUB-FAMILY B MEMBER 10, MITOCHONDRIAL"/>
    <property type="match status" value="1"/>
</dbReference>
<dbReference type="PANTHER" id="PTHR43394">
    <property type="entry name" value="ATP-DEPENDENT PERMEASE MDL1, MITOCHONDRIAL"/>
    <property type="match status" value="1"/>
</dbReference>
<dbReference type="Pfam" id="PF00664">
    <property type="entry name" value="ABC_membrane"/>
    <property type="match status" value="1"/>
</dbReference>
<dbReference type="Pfam" id="PF00005">
    <property type="entry name" value="ABC_tran"/>
    <property type="match status" value="1"/>
</dbReference>
<dbReference type="SMART" id="SM00382">
    <property type="entry name" value="AAA"/>
    <property type="match status" value="1"/>
</dbReference>
<dbReference type="SUPFAM" id="SSF90123">
    <property type="entry name" value="ABC transporter transmembrane region"/>
    <property type="match status" value="1"/>
</dbReference>
<dbReference type="SUPFAM" id="SSF52540">
    <property type="entry name" value="P-loop containing nucleoside triphosphate hydrolases"/>
    <property type="match status" value="1"/>
</dbReference>
<dbReference type="PROSITE" id="PS50929">
    <property type="entry name" value="ABC_TM1F"/>
    <property type="match status" value="1"/>
</dbReference>
<dbReference type="PROSITE" id="PS50893">
    <property type="entry name" value="ABC_TRANSPORTER_2"/>
    <property type="match status" value="1"/>
</dbReference>